<organism>
    <name type="scientific">Schizosaccharomyces pombe (strain 972 / ATCC 24843)</name>
    <name type="common">Fission yeast</name>
    <dbReference type="NCBI Taxonomy" id="284812"/>
    <lineage>
        <taxon>Eukaryota</taxon>
        <taxon>Fungi</taxon>
        <taxon>Dikarya</taxon>
        <taxon>Ascomycota</taxon>
        <taxon>Taphrinomycotina</taxon>
        <taxon>Schizosaccharomycetes</taxon>
        <taxon>Schizosaccharomycetales</taxon>
        <taxon>Schizosaccharomycetaceae</taxon>
        <taxon>Schizosaccharomyces</taxon>
    </lineage>
</organism>
<reference evidence="4" key="1">
    <citation type="journal article" date="2002" name="Nature">
        <title>The genome sequence of Schizosaccharomyces pombe.</title>
        <authorList>
            <person name="Wood V."/>
            <person name="Gwilliam R."/>
            <person name="Rajandream M.A."/>
            <person name="Lyne M.H."/>
            <person name="Lyne R."/>
            <person name="Stewart A."/>
            <person name="Sgouros J.G."/>
            <person name="Peat N."/>
            <person name="Hayles J."/>
            <person name="Baker S.G."/>
            <person name="Basham D."/>
            <person name="Bowman S."/>
            <person name="Brooks K."/>
            <person name="Brown D."/>
            <person name="Brown S."/>
            <person name="Chillingworth T."/>
            <person name="Churcher C.M."/>
            <person name="Collins M."/>
            <person name="Connor R."/>
            <person name="Cronin A."/>
            <person name="Davis P."/>
            <person name="Feltwell T."/>
            <person name="Fraser A."/>
            <person name="Gentles S."/>
            <person name="Goble A."/>
            <person name="Hamlin N."/>
            <person name="Harris D.E."/>
            <person name="Hidalgo J."/>
            <person name="Hodgson G."/>
            <person name="Holroyd S."/>
            <person name="Hornsby T."/>
            <person name="Howarth S."/>
            <person name="Huckle E.J."/>
            <person name="Hunt S."/>
            <person name="Jagels K."/>
            <person name="James K.D."/>
            <person name="Jones L."/>
            <person name="Jones M."/>
            <person name="Leather S."/>
            <person name="McDonald S."/>
            <person name="McLean J."/>
            <person name="Mooney P."/>
            <person name="Moule S."/>
            <person name="Mungall K.L."/>
            <person name="Murphy L.D."/>
            <person name="Niblett D."/>
            <person name="Odell C."/>
            <person name="Oliver K."/>
            <person name="O'Neil S."/>
            <person name="Pearson D."/>
            <person name="Quail M.A."/>
            <person name="Rabbinowitsch E."/>
            <person name="Rutherford K.M."/>
            <person name="Rutter S."/>
            <person name="Saunders D."/>
            <person name="Seeger K."/>
            <person name="Sharp S."/>
            <person name="Skelton J."/>
            <person name="Simmonds M.N."/>
            <person name="Squares R."/>
            <person name="Squares S."/>
            <person name="Stevens K."/>
            <person name="Taylor K."/>
            <person name="Taylor R.G."/>
            <person name="Tivey A."/>
            <person name="Walsh S.V."/>
            <person name="Warren T."/>
            <person name="Whitehead S."/>
            <person name="Woodward J.R."/>
            <person name="Volckaert G."/>
            <person name="Aert R."/>
            <person name="Robben J."/>
            <person name="Grymonprez B."/>
            <person name="Weltjens I."/>
            <person name="Vanstreels E."/>
            <person name="Rieger M."/>
            <person name="Schaefer M."/>
            <person name="Mueller-Auer S."/>
            <person name="Gabel C."/>
            <person name="Fuchs M."/>
            <person name="Duesterhoeft A."/>
            <person name="Fritzc C."/>
            <person name="Holzer E."/>
            <person name="Moestl D."/>
            <person name="Hilbert H."/>
            <person name="Borzym K."/>
            <person name="Langer I."/>
            <person name="Beck A."/>
            <person name="Lehrach H."/>
            <person name="Reinhardt R."/>
            <person name="Pohl T.M."/>
            <person name="Eger P."/>
            <person name="Zimmermann W."/>
            <person name="Wedler H."/>
            <person name="Wambutt R."/>
            <person name="Purnelle B."/>
            <person name="Goffeau A."/>
            <person name="Cadieu E."/>
            <person name="Dreano S."/>
            <person name="Gloux S."/>
            <person name="Lelaure V."/>
            <person name="Mottier S."/>
            <person name="Galibert F."/>
            <person name="Aves S.J."/>
            <person name="Xiang Z."/>
            <person name="Hunt C."/>
            <person name="Moore K."/>
            <person name="Hurst S.M."/>
            <person name="Lucas M."/>
            <person name="Rochet M."/>
            <person name="Gaillardin C."/>
            <person name="Tallada V.A."/>
            <person name="Garzon A."/>
            <person name="Thode G."/>
            <person name="Daga R.R."/>
            <person name="Cruzado L."/>
            <person name="Jimenez J."/>
            <person name="Sanchez M."/>
            <person name="del Rey F."/>
            <person name="Benito J."/>
            <person name="Dominguez A."/>
            <person name="Revuelta J.L."/>
            <person name="Moreno S."/>
            <person name="Armstrong J."/>
            <person name="Forsburg S.L."/>
            <person name="Cerutti L."/>
            <person name="Lowe T."/>
            <person name="McCombie W.R."/>
            <person name="Paulsen I."/>
            <person name="Potashkin J."/>
            <person name="Shpakovski G.V."/>
            <person name="Ussery D."/>
            <person name="Barrell B.G."/>
            <person name="Nurse P."/>
        </authorList>
    </citation>
    <scope>NUCLEOTIDE SEQUENCE [LARGE SCALE GENOMIC DNA]</scope>
    <source>
        <strain>972 / ATCC 24843</strain>
    </source>
</reference>
<reference evidence="3" key="2">
    <citation type="journal article" date="2006" name="Nat. Biotechnol.">
        <title>ORFeome cloning and global analysis of protein localization in the fission yeast Schizosaccharomyces pombe.</title>
        <authorList>
            <person name="Matsuyama A."/>
            <person name="Arai R."/>
            <person name="Yashiroda Y."/>
            <person name="Shirai A."/>
            <person name="Kamata A."/>
            <person name="Sekido S."/>
            <person name="Kobayashi Y."/>
            <person name="Hashimoto A."/>
            <person name="Hamamoto M."/>
            <person name="Hiraoka Y."/>
            <person name="Horinouchi S."/>
            <person name="Yoshida M."/>
        </authorList>
    </citation>
    <scope>SUBCELLULAR LOCATION [LARGE SCALE ANALYSIS]</scope>
</reference>
<proteinExistence type="inferred from homology"/>
<comment type="function">
    <text evidence="1">Has several reductase activities that are NAD(P)H-dependent and involve FMN as a cofactor. May be involved in ferric iron assimilation (By similarity).</text>
</comment>
<comment type="catalytic activity">
    <reaction evidence="1">
        <text>FMNH2 + NADP(+) = FMN + NADPH + 2 H(+)</text>
        <dbReference type="Rhea" id="RHEA:21624"/>
        <dbReference type="ChEBI" id="CHEBI:15378"/>
        <dbReference type="ChEBI" id="CHEBI:57618"/>
        <dbReference type="ChEBI" id="CHEBI:57783"/>
        <dbReference type="ChEBI" id="CHEBI:58210"/>
        <dbReference type="ChEBI" id="CHEBI:58349"/>
        <dbReference type="EC" id="1.5.1.39"/>
    </reaction>
</comment>
<comment type="catalytic activity">
    <reaction evidence="1">
        <text>FMNH2 + NAD(+) = FMN + NADH + 2 H(+)</text>
        <dbReference type="Rhea" id="RHEA:21620"/>
        <dbReference type="ChEBI" id="CHEBI:15378"/>
        <dbReference type="ChEBI" id="CHEBI:57540"/>
        <dbReference type="ChEBI" id="CHEBI:57618"/>
        <dbReference type="ChEBI" id="CHEBI:57945"/>
        <dbReference type="ChEBI" id="CHEBI:58210"/>
        <dbReference type="EC" id="1.5.1.39"/>
    </reaction>
</comment>
<comment type="subunit">
    <text evidence="1">Homodimer.</text>
</comment>
<comment type="subcellular location">
    <subcellularLocation>
        <location evidence="2">Cytoplasm</location>
    </subcellularLocation>
    <subcellularLocation>
        <location evidence="2">Nucleus</location>
    </subcellularLocation>
</comment>
<evidence type="ECO:0000250" key="1">
    <source>
        <dbReference type="UniProtKB" id="Q07923"/>
    </source>
</evidence>
<evidence type="ECO:0000269" key="2">
    <source>
    </source>
</evidence>
<evidence type="ECO:0000305" key="3"/>
<evidence type="ECO:0000312" key="4">
    <source>
        <dbReference type="EMBL" id="CAB60680.1"/>
    </source>
</evidence>
<sequence length="200" mass="22125">MTLPEKLLKITPKILVIMGSVRSKRLCPTIATWVGEMGKRETNFDYEKVDLTDWPLSMSDEPGLPIMGIDVYTQEHTKAWGSKIAGADGFVFVTPQYNGGYPAILKNALDHLYHEWNGKPLLIVSYGGHGGGDCASQLKHVAGFLKMRVAPTMPALTLPRDKIVQGVVDPAVEFTKHLGELKKAFGEFSQLFESNPERKP</sequence>
<keyword id="KW-0963">Cytoplasm</keyword>
<keyword id="KW-0285">Flavoprotein</keyword>
<keyword id="KW-0288">FMN</keyword>
<keyword id="KW-0520">NAD</keyword>
<keyword id="KW-0521">NADP</keyword>
<keyword id="KW-0539">Nucleus</keyword>
<keyword id="KW-0560">Oxidoreductase</keyword>
<keyword id="KW-1185">Reference proteome</keyword>
<name>FMNR_SCHPO</name>
<feature type="chain" id="PRO_0000315910" description="NAD(P)H-dependent FMN reductase C4B3.06c">
    <location>
        <begin position="1"/>
        <end position="200"/>
    </location>
</feature>
<feature type="binding site" evidence="1">
    <location>
        <position position="22"/>
    </location>
    <ligand>
        <name>FMN</name>
        <dbReference type="ChEBI" id="CHEBI:58210"/>
    </ligand>
</feature>
<feature type="binding site" evidence="1">
    <location>
        <begin position="96"/>
        <end position="99"/>
    </location>
    <ligand>
        <name>FMN</name>
        <dbReference type="ChEBI" id="CHEBI:58210"/>
    </ligand>
</feature>
<feature type="binding site" evidence="1">
    <location>
        <position position="126"/>
    </location>
    <ligand>
        <name>FMN</name>
        <dbReference type="ChEBI" id="CHEBI:58210"/>
    </ligand>
</feature>
<protein>
    <recommendedName>
        <fullName>NAD(P)H-dependent FMN reductase C4B3.06c</fullName>
        <shortName>FMN reductase C4B3.06c</shortName>
        <ecNumber>1.5.1.39</ecNumber>
    </recommendedName>
    <alternativeName>
        <fullName>Azoreductase C4B3.06c</fullName>
    </alternativeName>
    <alternativeName>
        <fullName>FMN reductase [NAD(P)H]</fullName>
    </alternativeName>
</protein>
<gene>
    <name type="ORF">SPCC4B3.06c</name>
</gene>
<dbReference type="EC" id="1.5.1.39"/>
<dbReference type="EMBL" id="CU329672">
    <property type="protein sequence ID" value="CAB60680.1"/>
    <property type="molecule type" value="Genomic_DNA"/>
</dbReference>
<dbReference type="PIR" id="T50442">
    <property type="entry name" value="T50442"/>
</dbReference>
<dbReference type="RefSeq" id="NP_588084.1">
    <property type="nucleotide sequence ID" value="NM_001023076.2"/>
</dbReference>
<dbReference type="SMR" id="Q9USJ6"/>
<dbReference type="BioGRID" id="275302">
    <property type="interactions" value="5"/>
</dbReference>
<dbReference type="FunCoup" id="Q9USJ6">
    <property type="interactions" value="347"/>
</dbReference>
<dbReference type="STRING" id="284812.Q9USJ6"/>
<dbReference type="iPTMnet" id="Q9USJ6"/>
<dbReference type="PaxDb" id="4896-SPCC4B3.06c.1"/>
<dbReference type="EnsemblFungi" id="SPCC4B3.06c.1">
    <property type="protein sequence ID" value="SPCC4B3.06c.1:pep"/>
    <property type="gene ID" value="SPCC4B3.06c"/>
</dbReference>
<dbReference type="KEGG" id="spo:2538718"/>
<dbReference type="PomBase" id="SPCC4B3.06c"/>
<dbReference type="VEuPathDB" id="FungiDB:SPCC4B3.06c"/>
<dbReference type="eggNOG" id="KOG4530">
    <property type="taxonomic scope" value="Eukaryota"/>
</dbReference>
<dbReference type="HOGENOM" id="CLU_055322_2_1_1"/>
<dbReference type="InParanoid" id="Q9USJ6"/>
<dbReference type="OMA" id="AYAHEHT"/>
<dbReference type="PhylomeDB" id="Q9USJ6"/>
<dbReference type="PRO" id="PR:Q9USJ6"/>
<dbReference type="Proteomes" id="UP000002485">
    <property type="component" value="Chromosome III"/>
</dbReference>
<dbReference type="GO" id="GO:0005829">
    <property type="term" value="C:cytosol"/>
    <property type="evidence" value="ECO:0007005"/>
    <property type="project" value="PomBase"/>
</dbReference>
<dbReference type="GO" id="GO:0005634">
    <property type="term" value="C:nucleus"/>
    <property type="evidence" value="ECO:0007005"/>
    <property type="project" value="PomBase"/>
</dbReference>
<dbReference type="GO" id="GO:0010181">
    <property type="term" value="F:FMN binding"/>
    <property type="evidence" value="ECO:0000318"/>
    <property type="project" value="GO_Central"/>
</dbReference>
<dbReference type="GO" id="GO:0052874">
    <property type="term" value="F:FMN reductase (NADH) activity"/>
    <property type="evidence" value="ECO:0007669"/>
    <property type="project" value="RHEA"/>
</dbReference>
<dbReference type="GO" id="GO:0052873">
    <property type="term" value="F:FMN reductase (NADPH) activity"/>
    <property type="evidence" value="ECO:0007669"/>
    <property type="project" value="RHEA"/>
</dbReference>
<dbReference type="GO" id="GO:0008752">
    <property type="term" value="F:FMN reductase [NAD(P)H] activity"/>
    <property type="evidence" value="ECO:0007669"/>
    <property type="project" value="UniProtKB-EC"/>
</dbReference>
<dbReference type="GO" id="GO:0003955">
    <property type="term" value="F:NAD(P)H dehydrogenase (quinone) activity"/>
    <property type="evidence" value="ECO:0000266"/>
    <property type="project" value="PomBase"/>
</dbReference>
<dbReference type="FunFam" id="3.40.50.360:FF:000052">
    <property type="entry name" value="NAD(P)H-dependent FMN reductase LOT6"/>
    <property type="match status" value="1"/>
</dbReference>
<dbReference type="Gene3D" id="3.40.50.360">
    <property type="match status" value="1"/>
</dbReference>
<dbReference type="InterPro" id="IPR029039">
    <property type="entry name" value="Flavoprotein-like_sf"/>
</dbReference>
<dbReference type="InterPro" id="IPR005025">
    <property type="entry name" value="FMN_Rdtase-like_dom"/>
</dbReference>
<dbReference type="InterPro" id="IPR050712">
    <property type="entry name" value="NAD(P)H-dep_reductase"/>
</dbReference>
<dbReference type="PANTHER" id="PTHR30543">
    <property type="entry name" value="CHROMATE REDUCTASE"/>
    <property type="match status" value="1"/>
</dbReference>
<dbReference type="PANTHER" id="PTHR30543:SF21">
    <property type="entry name" value="NAD(P)H-DEPENDENT FMN REDUCTASE LOT6"/>
    <property type="match status" value="1"/>
</dbReference>
<dbReference type="Pfam" id="PF03358">
    <property type="entry name" value="FMN_red"/>
    <property type="match status" value="1"/>
</dbReference>
<dbReference type="SUPFAM" id="SSF52218">
    <property type="entry name" value="Flavoproteins"/>
    <property type="match status" value="1"/>
</dbReference>
<accession>Q9USJ6</accession>